<organism>
    <name type="scientific">Beutenbergia cavernae (strain ATCC BAA-8 / DSM 12333 / CCUG 43141 / JCM 11478 / NBRC 16432 / NCIMB 13614 / HKI 0122)</name>
    <dbReference type="NCBI Taxonomy" id="471853"/>
    <lineage>
        <taxon>Bacteria</taxon>
        <taxon>Bacillati</taxon>
        <taxon>Actinomycetota</taxon>
        <taxon>Actinomycetes</taxon>
        <taxon>Micrococcales</taxon>
        <taxon>Beutenbergiaceae</taxon>
        <taxon>Beutenbergia</taxon>
    </lineage>
</organism>
<gene>
    <name evidence="1" type="primary">rnpA</name>
    <name type="ordered locus">Bcav_4224</name>
</gene>
<name>RNPA_BEUC1</name>
<proteinExistence type="inferred from homology"/>
<protein>
    <recommendedName>
        <fullName evidence="1">Ribonuclease P protein component</fullName>
        <shortName evidence="1">RNase P protein</shortName>
        <shortName evidence="1">RNaseP protein</shortName>
        <ecNumber evidence="1">3.1.26.5</ecNumber>
    </recommendedName>
    <alternativeName>
        <fullName evidence="1">Protein C5</fullName>
    </alternativeName>
</protein>
<accession>C5C6N8</accession>
<feature type="chain" id="PRO_1000204338" description="Ribonuclease P protein component">
    <location>
        <begin position="1"/>
        <end position="119"/>
    </location>
</feature>
<sequence>MLPAANRMRRSDEFARTFRRGTRRGTRRLVVHAATTDAGEPPRVGFVVSKAVGGAVVRNRVKRRLRAVLMHRVTDLLPGTLVVVRALPPSANATSAELERDVDGSLTSLGLRAKVVPAR</sequence>
<evidence type="ECO:0000255" key="1">
    <source>
        <dbReference type="HAMAP-Rule" id="MF_00227"/>
    </source>
</evidence>
<keyword id="KW-0255">Endonuclease</keyword>
<keyword id="KW-0378">Hydrolase</keyword>
<keyword id="KW-0540">Nuclease</keyword>
<keyword id="KW-1185">Reference proteome</keyword>
<keyword id="KW-0694">RNA-binding</keyword>
<keyword id="KW-0819">tRNA processing</keyword>
<comment type="function">
    <text evidence="1">RNaseP catalyzes the removal of the 5'-leader sequence from pre-tRNA to produce the mature 5'-terminus. It can also cleave other RNA substrates such as 4.5S RNA. The protein component plays an auxiliary but essential role in vivo by binding to the 5'-leader sequence and broadening the substrate specificity of the ribozyme.</text>
</comment>
<comment type="catalytic activity">
    <reaction evidence="1">
        <text>Endonucleolytic cleavage of RNA, removing 5'-extranucleotides from tRNA precursor.</text>
        <dbReference type="EC" id="3.1.26.5"/>
    </reaction>
</comment>
<comment type="subunit">
    <text evidence="1">Consists of a catalytic RNA component (M1 or rnpB) and a protein subunit.</text>
</comment>
<comment type="similarity">
    <text evidence="1">Belongs to the RnpA family.</text>
</comment>
<dbReference type="EC" id="3.1.26.5" evidence="1"/>
<dbReference type="EMBL" id="CP001618">
    <property type="protein sequence ID" value="ACQ82462.1"/>
    <property type="molecule type" value="Genomic_DNA"/>
</dbReference>
<dbReference type="SMR" id="C5C6N8"/>
<dbReference type="STRING" id="471853.Bcav_4224"/>
<dbReference type="KEGG" id="bcv:Bcav_4224"/>
<dbReference type="eggNOG" id="COG0594">
    <property type="taxonomic scope" value="Bacteria"/>
</dbReference>
<dbReference type="HOGENOM" id="CLU_117179_4_1_11"/>
<dbReference type="OrthoDB" id="196964at2"/>
<dbReference type="Proteomes" id="UP000007962">
    <property type="component" value="Chromosome"/>
</dbReference>
<dbReference type="GO" id="GO:0030677">
    <property type="term" value="C:ribonuclease P complex"/>
    <property type="evidence" value="ECO:0007669"/>
    <property type="project" value="TreeGrafter"/>
</dbReference>
<dbReference type="GO" id="GO:0042781">
    <property type="term" value="F:3'-tRNA processing endoribonuclease activity"/>
    <property type="evidence" value="ECO:0007669"/>
    <property type="project" value="TreeGrafter"/>
</dbReference>
<dbReference type="GO" id="GO:0004526">
    <property type="term" value="F:ribonuclease P activity"/>
    <property type="evidence" value="ECO:0007669"/>
    <property type="project" value="UniProtKB-UniRule"/>
</dbReference>
<dbReference type="GO" id="GO:0000049">
    <property type="term" value="F:tRNA binding"/>
    <property type="evidence" value="ECO:0007669"/>
    <property type="project" value="UniProtKB-UniRule"/>
</dbReference>
<dbReference type="GO" id="GO:0001682">
    <property type="term" value="P:tRNA 5'-leader removal"/>
    <property type="evidence" value="ECO:0007669"/>
    <property type="project" value="UniProtKB-UniRule"/>
</dbReference>
<dbReference type="Gene3D" id="3.30.230.10">
    <property type="match status" value="1"/>
</dbReference>
<dbReference type="HAMAP" id="MF_00227">
    <property type="entry name" value="RNase_P"/>
    <property type="match status" value="1"/>
</dbReference>
<dbReference type="InterPro" id="IPR020568">
    <property type="entry name" value="Ribosomal_Su5_D2-typ_SF"/>
</dbReference>
<dbReference type="InterPro" id="IPR014721">
    <property type="entry name" value="Ribsml_uS5_D2-typ_fold_subgr"/>
</dbReference>
<dbReference type="InterPro" id="IPR000100">
    <property type="entry name" value="RNase_P"/>
</dbReference>
<dbReference type="InterPro" id="IPR020539">
    <property type="entry name" value="RNase_P_CS"/>
</dbReference>
<dbReference type="NCBIfam" id="TIGR00188">
    <property type="entry name" value="rnpA"/>
    <property type="match status" value="1"/>
</dbReference>
<dbReference type="PANTHER" id="PTHR33992">
    <property type="entry name" value="RIBONUCLEASE P PROTEIN COMPONENT"/>
    <property type="match status" value="1"/>
</dbReference>
<dbReference type="PANTHER" id="PTHR33992:SF1">
    <property type="entry name" value="RIBONUCLEASE P PROTEIN COMPONENT"/>
    <property type="match status" value="1"/>
</dbReference>
<dbReference type="Pfam" id="PF00825">
    <property type="entry name" value="Ribonuclease_P"/>
    <property type="match status" value="1"/>
</dbReference>
<dbReference type="SUPFAM" id="SSF54211">
    <property type="entry name" value="Ribosomal protein S5 domain 2-like"/>
    <property type="match status" value="1"/>
</dbReference>
<dbReference type="PROSITE" id="PS00648">
    <property type="entry name" value="RIBONUCLEASE_P"/>
    <property type="match status" value="1"/>
</dbReference>
<reference key="1">
    <citation type="journal article" date="2009" name="Stand. Genomic Sci.">
        <title>Complete genome sequence of Beutenbergia cavernae type strain (HKI 0122).</title>
        <authorList>
            <person name="Land M."/>
            <person name="Pukall R."/>
            <person name="Abt B."/>
            <person name="Goker M."/>
            <person name="Rohde M."/>
            <person name="Glavina Del Rio T."/>
            <person name="Tice H."/>
            <person name="Copeland A."/>
            <person name="Cheng J.F."/>
            <person name="Lucas S."/>
            <person name="Chen F."/>
            <person name="Nolan M."/>
            <person name="Bruce D."/>
            <person name="Goodwin L."/>
            <person name="Pitluck S."/>
            <person name="Ivanova N."/>
            <person name="Mavromatis K."/>
            <person name="Ovchinnikova G."/>
            <person name="Pati A."/>
            <person name="Chen A."/>
            <person name="Palaniappan K."/>
            <person name="Hauser L."/>
            <person name="Chang Y.J."/>
            <person name="Jefferies C.C."/>
            <person name="Saunders E."/>
            <person name="Brettin T."/>
            <person name="Detter J.C."/>
            <person name="Han C."/>
            <person name="Chain P."/>
            <person name="Bristow J."/>
            <person name="Eisen J.A."/>
            <person name="Markowitz V."/>
            <person name="Hugenholtz P."/>
            <person name="Kyrpides N.C."/>
            <person name="Klenk H.P."/>
            <person name="Lapidus A."/>
        </authorList>
    </citation>
    <scope>NUCLEOTIDE SEQUENCE [LARGE SCALE GENOMIC DNA]</scope>
    <source>
        <strain>ATCC BAA-8 / DSM 12333 / CCUG 43141 / JCM 11478 / NBRC 16432 / NCIMB 13614 / HKI 0122</strain>
    </source>
</reference>